<name>SIDA_ARTBC</name>
<evidence type="ECO:0000250" key="1">
    <source>
        <dbReference type="UniProtKB" id="E9QYP0"/>
    </source>
</evidence>
<evidence type="ECO:0000250" key="2">
    <source>
        <dbReference type="UniProtKB" id="G5EB76"/>
    </source>
</evidence>
<evidence type="ECO:0000256" key="3">
    <source>
        <dbReference type="SAM" id="MobiDB-lite"/>
    </source>
</evidence>
<evidence type="ECO:0000269" key="4">
    <source>
    </source>
</evidence>
<evidence type="ECO:0000303" key="5">
    <source>
    </source>
</evidence>
<evidence type="ECO:0000305" key="6"/>
<evidence type="ECO:0000305" key="7">
    <source>
    </source>
</evidence>
<proteinExistence type="evidence at transcript level"/>
<keyword id="KW-0274">FAD</keyword>
<keyword id="KW-0285">Flavoprotein</keyword>
<keyword id="KW-0503">Monooxygenase</keyword>
<keyword id="KW-0521">NADP</keyword>
<keyword id="KW-0560">Oxidoreductase</keyword>
<keyword id="KW-1185">Reference proteome</keyword>
<reference key="1">
    <citation type="journal article" date="2011" name="Genome Biol.">
        <title>Comparative and functional genomics provide insights into the pathogenicity of dermatophytic fungi.</title>
        <authorList>
            <person name="Burmester A."/>
            <person name="Shelest E."/>
            <person name="Gloeckner G."/>
            <person name="Heddergott C."/>
            <person name="Schindler S."/>
            <person name="Staib P."/>
            <person name="Heidel A."/>
            <person name="Felder M."/>
            <person name="Petzold A."/>
            <person name="Szafranski K."/>
            <person name="Feuermann M."/>
            <person name="Pedruzzi I."/>
            <person name="Priebe S."/>
            <person name="Groth M."/>
            <person name="Winkler R."/>
            <person name="Li W."/>
            <person name="Kniemeyer O."/>
            <person name="Schroeckh V."/>
            <person name="Hertweck C."/>
            <person name="Hube B."/>
            <person name="White T.C."/>
            <person name="Platzer M."/>
            <person name="Guthke R."/>
            <person name="Heitman J."/>
            <person name="Woestemeyer J."/>
            <person name="Zipfel P.F."/>
            <person name="Monod M."/>
            <person name="Brakhage A.A."/>
        </authorList>
    </citation>
    <scope>NUCLEOTIDE SEQUENCE [LARGE SCALE GENOMIC DNA]</scope>
    <source>
        <strain>ATCC MYA-4681 / CBS 112371</strain>
    </source>
</reference>
<reference key="2">
    <citation type="journal article" date="2016" name="PLoS ONE">
        <title>HapX mediates iron homeostasis in the pathogenic dermatophyte Arthroderma benhamiae but is dispensable for virulence.</title>
        <authorList>
            <person name="Kroeber A."/>
            <person name="Scherlach K."/>
            <person name="Hortschansky P."/>
            <person name="Shelest E."/>
            <person name="Staib P."/>
            <person name="Kniemeyer O."/>
            <person name="Brakhage A.A."/>
        </authorList>
    </citation>
    <scope>FUNCTION</scope>
    <scope>INDUCTION</scope>
</reference>
<gene>
    <name evidence="5" type="primary">sidA</name>
    <name type="ORF">ARB_07687</name>
</gene>
<dbReference type="EC" id="1.14.13.196" evidence="7"/>
<dbReference type="EMBL" id="ABSU01000010">
    <property type="protein sequence ID" value="EFE33327.1"/>
    <property type="molecule type" value="Genomic_DNA"/>
</dbReference>
<dbReference type="RefSeq" id="XP_003013967.1">
    <property type="nucleotide sequence ID" value="XM_003013921.1"/>
</dbReference>
<dbReference type="SMR" id="D4AU57"/>
<dbReference type="STRING" id="663331.D4AU57"/>
<dbReference type="GeneID" id="9521385"/>
<dbReference type="KEGG" id="abe:ARB_07687"/>
<dbReference type="eggNOG" id="KOG1399">
    <property type="taxonomic scope" value="Eukaryota"/>
</dbReference>
<dbReference type="HOGENOM" id="CLU_020931_2_0_1"/>
<dbReference type="OMA" id="YHGNTNY"/>
<dbReference type="Proteomes" id="UP000008866">
    <property type="component" value="Unassembled WGS sequence"/>
</dbReference>
<dbReference type="GO" id="GO:0031172">
    <property type="term" value="F:ornithine N5-monooxygenase activity"/>
    <property type="evidence" value="ECO:0007669"/>
    <property type="project" value="RHEA"/>
</dbReference>
<dbReference type="GO" id="GO:0009058">
    <property type="term" value="P:biosynthetic process"/>
    <property type="evidence" value="ECO:0007669"/>
    <property type="project" value="UniProtKB-ARBA"/>
</dbReference>
<dbReference type="GO" id="GO:0006879">
    <property type="term" value="P:intracellular iron ion homeostasis"/>
    <property type="evidence" value="ECO:0007669"/>
    <property type="project" value="TreeGrafter"/>
</dbReference>
<dbReference type="FunFam" id="3.50.50.60:FF:000195">
    <property type="entry name" value="L-ornithine N(5)-monooxygenase"/>
    <property type="match status" value="1"/>
</dbReference>
<dbReference type="Gene3D" id="3.50.50.60">
    <property type="entry name" value="FAD/NAD(P)-binding domain"/>
    <property type="match status" value="1"/>
</dbReference>
<dbReference type="InterPro" id="IPR036188">
    <property type="entry name" value="FAD/NAD-bd_sf"/>
</dbReference>
<dbReference type="InterPro" id="IPR025700">
    <property type="entry name" value="Lys/Orn_oxygenase"/>
</dbReference>
<dbReference type="PANTHER" id="PTHR42802:SF1">
    <property type="entry name" value="L-ORNITHINE N(5)-MONOOXYGENASE"/>
    <property type="match status" value="1"/>
</dbReference>
<dbReference type="PANTHER" id="PTHR42802">
    <property type="entry name" value="MONOOXYGENASE"/>
    <property type="match status" value="1"/>
</dbReference>
<dbReference type="Pfam" id="PF13434">
    <property type="entry name" value="Lys_Orn_oxgnase"/>
    <property type="match status" value="1"/>
</dbReference>
<dbReference type="SUPFAM" id="SSF51905">
    <property type="entry name" value="FAD/NAD(P)-binding domain"/>
    <property type="match status" value="1"/>
</dbReference>
<comment type="function">
    <text evidence="4">L-ornithine N(5)-monooxygenase; part of the siderophore biosynthetic pathway (PubMed:26960149). Arthroderma benhamiae produces 2 types of extracellular siderophores, ferrichrome C and ferricrocin (PubMed:26960149). The biosynthesis of these siderophores depends on the hydroxylation of ornithine to N(5)-hydroxyornithine, catalyzed by the monooxygenase sidA (PubMed:26960149). The structure of ferricrocin differs from ferrichrome C only by a serine for alanine substitution and the assembly of both siderophores is suggested to be performed by the nonribosomal peptide synthase (NRPS) sidC (PubMed:26960149).</text>
</comment>
<comment type="catalytic activity">
    <reaction evidence="1">
        <text>L-ornithine + NADPH + O2 = N(5)-hydroxy-L-ornithine + NADP(+) + H2O</text>
        <dbReference type="Rhea" id="RHEA:41508"/>
        <dbReference type="ChEBI" id="CHEBI:15377"/>
        <dbReference type="ChEBI" id="CHEBI:15379"/>
        <dbReference type="ChEBI" id="CHEBI:46911"/>
        <dbReference type="ChEBI" id="CHEBI:57783"/>
        <dbReference type="ChEBI" id="CHEBI:58349"/>
        <dbReference type="ChEBI" id="CHEBI:78275"/>
        <dbReference type="EC" id="1.14.13.196"/>
    </reaction>
</comment>
<comment type="catalytic activity">
    <reaction evidence="1">
        <text>L-ornithine + NADH + O2 = N(5)-hydroxy-L-ornithine + NAD(+) + H2O</text>
        <dbReference type="Rhea" id="RHEA:41512"/>
        <dbReference type="ChEBI" id="CHEBI:15377"/>
        <dbReference type="ChEBI" id="CHEBI:15379"/>
        <dbReference type="ChEBI" id="CHEBI:46911"/>
        <dbReference type="ChEBI" id="CHEBI:57540"/>
        <dbReference type="ChEBI" id="CHEBI:57945"/>
        <dbReference type="ChEBI" id="CHEBI:78275"/>
        <dbReference type="EC" id="1.14.13.196"/>
    </reaction>
</comment>
<comment type="cofactor">
    <cofactor evidence="1">
        <name>FAD</name>
        <dbReference type="ChEBI" id="CHEBI:57692"/>
    </cofactor>
    <text evidence="1">Binds 1 FAD per subunit.</text>
</comment>
<comment type="pathway">
    <text evidence="7">Siderophore biosynthesis.</text>
</comment>
<comment type="subunit">
    <text evidence="1">Homotetramer.</text>
</comment>
<comment type="induction">
    <text evidence="4">Expression is under the control of the iron acquisition regulator hapX (PubMed:26960149).</text>
</comment>
<comment type="similarity">
    <text evidence="6">Belongs to the lysine N(6)-hydroxylase/L-ornithine N(5)-oxygenase family.</text>
</comment>
<accession>D4AU57</accession>
<feature type="chain" id="PRO_0000444389" description="L-ornithine N(5)-monooxygenase">
    <location>
        <begin position="1"/>
        <end position="501"/>
    </location>
</feature>
<feature type="region of interest" description="Disordered" evidence="3">
    <location>
        <begin position="1"/>
        <end position="40"/>
    </location>
</feature>
<feature type="compositionally biased region" description="Low complexity" evidence="3">
    <location>
        <begin position="1"/>
        <end position="16"/>
    </location>
</feature>
<feature type="compositionally biased region" description="Polar residues" evidence="3">
    <location>
        <begin position="26"/>
        <end position="37"/>
    </location>
</feature>
<feature type="binding site" evidence="1">
    <location>
        <begin position="92"/>
        <end position="100"/>
    </location>
    <ligand>
        <name>FAD</name>
        <dbReference type="ChEBI" id="CHEBI:57692"/>
    </ligand>
</feature>
<feature type="binding site" evidence="1">
    <location>
        <position position="111"/>
    </location>
    <ligand>
        <name>FAD</name>
        <dbReference type="ChEBI" id="CHEBI:57692"/>
    </ligand>
</feature>
<feature type="binding site" evidence="1">
    <location>
        <position position="116"/>
    </location>
    <ligand>
        <name>substrate</name>
    </ligand>
</feature>
<feature type="binding site" evidence="1">
    <location>
        <position position="177"/>
    </location>
    <ligand>
        <name>FAD</name>
        <dbReference type="ChEBI" id="CHEBI:57692"/>
    </ligand>
</feature>
<feature type="binding site" evidence="1">
    <location>
        <begin position="263"/>
        <end position="266"/>
    </location>
    <ligand>
        <name>NADP(+)</name>
        <dbReference type="ChEBI" id="CHEBI:58349"/>
    </ligand>
</feature>
<feature type="binding site" evidence="1">
    <location>
        <begin position="304"/>
        <end position="307"/>
    </location>
    <ligand>
        <name>substrate</name>
    </ligand>
</feature>
<feature type="binding site" evidence="1">
    <location>
        <begin position="334"/>
        <end position="336"/>
    </location>
    <ligand>
        <name>NADP(+)</name>
        <dbReference type="ChEBI" id="CHEBI:58349"/>
    </ligand>
</feature>
<feature type="binding site" evidence="1">
    <location>
        <position position="334"/>
    </location>
    <ligand>
        <name>substrate</name>
    </ligand>
</feature>
<feature type="binding site" evidence="1">
    <location>
        <begin position="476"/>
        <end position="478"/>
    </location>
    <ligand>
        <name>FAD</name>
        <dbReference type="ChEBI" id="CHEBI:57692"/>
    </ligand>
</feature>
<feature type="binding site" evidence="1">
    <location>
        <position position="479"/>
    </location>
    <ligand>
        <name>substrate</name>
    </ligand>
</feature>
<sequence length="501" mass="56173">MNGTSTTGNGFTNGTNYPVPKLELQPETTSTSPTRAQTHPLLPSVSDDELHDLICVGFGPASLAIAIALHDRLLETAHSPDITTVPKICFLEKQSNFAWHSGMLLPGSKMQISFIKDLATIRNPRSEFTFLNYLQVHDRLLDFANLGTFLPARIEFEDYMKWCASKFANLVRYRTEVLDVTPSEVDPVTGKVHFFTVRSKVLETGEVTTRKARHVVVAIGGKPNIPAEFPTNSRIIHSSAYCTTLPSLLNNTLKEYSIAVAGSGQSAAEIFHDLQKRYPNAKTSLIMRDSALRPSDDSPFPSVNELFNPERVDQFFNQSEKERQHFLERHRSTNYSVVRPELIEQIYADMYIQKIQYPDETQWQHRIFSSCLISKVDSDKSEKLNLSLQHCHSENTTMNGTHNEEMNADALILATGYVRNAHESILASIEPLLAQKHMGWKVQRNYRLELDKNQVDVDAGIWLQGCNESTHGLSDSLLSILAVRGAEIVQAIFGAQISNGN</sequence>
<organism>
    <name type="scientific">Arthroderma benhamiae (strain ATCC MYA-4681 / CBS 112371)</name>
    <name type="common">Trichophyton mentagrophytes</name>
    <dbReference type="NCBI Taxonomy" id="663331"/>
    <lineage>
        <taxon>Eukaryota</taxon>
        <taxon>Fungi</taxon>
        <taxon>Dikarya</taxon>
        <taxon>Ascomycota</taxon>
        <taxon>Pezizomycotina</taxon>
        <taxon>Eurotiomycetes</taxon>
        <taxon>Eurotiomycetidae</taxon>
        <taxon>Onygenales</taxon>
        <taxon>Arthrodermataceae</taxon>
        <taxon>Trichophyton</taxon>
    </lineage>
</organism>
<protein>
    <recommendedName>
        <fullName evidence="5">L-ornithine N(5)-monooxygenase</fullName>
        <shortName evidence="2">OMO</shortName>
        <ecNumber evidence="7">1.14.13.196</ecNumber>
    </recommendedName>
    <alternativeName>
        <fullName evidence="5">L-ornithine N(5)-oxygenase</fullName>
    </alternativeName>
    <alternativeName>
        <fullName evidence="5">Siderophore biosynthesis protein A</fullName>
    </alternativeName>
</protein>